<dbReference type="SMR" id="P85058"/>
<dbReference type="GO" id="GO:0005576">
    <property type="term" value="C:extracellular region"/>
    <property type="evidence" value="ECO:0000314"/>
    <property type="project" value="UniProtKB"/>
</dbReference>
<dbReference type="GO" id="GO:0050829">
    <property type="term" value="P:defense response to Gram-negative bacterium"/>
    <property type="evidence" value="ECO:0000314"/>
    <property type="project" value="UniProtKB"/>
</dbReference>
<dbReference type="GO" id="GO:0050830">
    <property type="term" value="P:defense response to Gram-positive bacterium"/>
    <property type="evidence" value="ECO:0000314"/>
    <property type="project" value="UniProtKB"/>
</dbReference>
<dbReference type="GO" id="GO:0002553">
    <property type="term" value="P:histamine secretion by mast cell"/>
    <property type="evidence" value="ECO:0000314"/>
    <property type="project" value="UniProtKB"/>
</dbReference>
<dbReference type="GO" id="GO:0043306">
    <property type="term" value="P:positive regulation of mast cell degranulation"/>
    <property type="evidence" value="ECO:0000314"/>
    <property type="project" value="UniProtKB"/>
</dbReference>
<dbReference type="InterPro" id="IPR012521">
    <property type="entry name" value="Antimicrobial_frog_2"/>
</dbReference>
<dbReference type="Pfam" id="PF08023">
    <property type="entry name" value="Antimicrobial_2"/>
    <property type="match status" value="1"/>
</dbReference>
<evidence type="ECO:0000250" key="1">
    <source>
        <dbReference type="UniProtKB" id="P40840"/>
    </source>
</evidence>
<evidence type="ECO:0000255" key="2"/>
<evidence type="ECO:0000269" key="3">
    <source>
    </source>
</evidence>
<evidence type="ECO:0000303" key="4">
    <source>
    </source>
</evidence>
<evidence type="ECO:0000305" key="5"/>
<organism>
    <name type="scientific">Lithobates sevosus</name>
    <name type="common">Dusky gopher frog</name>
    <name type="synonym">Rana sevosa</name>
    <dbReference type="NCBI Taxonomy" id="299683"/>
    <lineage>
        <taxon>Eukaryota</taxon>
        <taxon>Metazoa</taxon>
        <taxon>Chordata</taxon>
        <taxon>Craniata</taxon>
        <taxon>Vertebrata</taxon>
        <taxon>Euteleostomi</taxon>
        <taxon>Amphibia</taxon>
        <taxon>Batrachia</taxon>
        <taxon>Anura</taxon>
        <taxon>Neobatrachia</taxon>
        <taxon>Ranoidea</taxon>
        <taxon>Ranidae</taxon>
        <taxon>Lithobates</taxon>
    </lineage>
</organism>
<proteinExistence type="evidence at protein level"/>
<comment type="function">
    <text evidence="3">Mast cell degranulating peptide. Causes histamine release from rat peritoneal mast cells in vitro. Has antibacterial activity against the Gram-negative bacterium E.coli K12 and Gram-positive bacterium M.luteus NCT C2665.</text>
</comment>
<comment type="subcellular location">
    <subcellularLocation>
        <location evidence="3">Secreted</location>
    </subcellularLocation>
</comment>
<comment type="tissue specificity">
    <text evidence="3">Expressed by the skin glands.</text>
</comment>
<comment type="mass spectrometry" mass="2948.0" method="MALDI" evidence="3"/>
<comment type="mass spectrometry" mass="2948.0" method="Electrospray" evidence="3"/>
<comment type="similarity">
    <text evidence="2">Belongs to the frog skin active peptide (FSAP) family. Ranatuerin subfamily.</text>
</comment>
<sequence length="28" mass="2950">AIMDTIKDTAKTVAVGLLNKLKCKITGC</sequence>
<name>RN2B_LITSE</name>
<feature type="peptide" id="PRO_0000271260" description="Ranatuerin-2SEb">
    <location>
        <begin position="1"/>
        <end position="28"/>
    </location>
</feature>
<feature type="disulfide bond" evidence="1">
    <location>
        <begin position="23"/>
        <end position="28"/>
    </location>
</feature>
<protein>
    <recommendedName>
        <fullName evidence="4">Ranatuerin-2SEb</fullName>
    </recommendedName>
</protein>
<accession>P85058</accession>
<keyword id="KW-0878">Amphibian defense peptide</keyword>
<keyword id="KW-0044">Antibiotic</keyword>
<keyword id="KW-0929">Antimicrobial</keyword>
<keyword id="KW-0903">Direct protein sequencing</keyword>
<keyword id="KW-1015">Disulfide bond</keyword>
<keyword id="KW-0395">Inflammatory response</keyword>
<keyword id="KW-0467">Mast cell degranulation</keyword>
<keyword id="KW-0964">Secreted</keyword>
<reference evidence="5" key="1">
    <citation type="journal article" date="2006" name="Peptides">
        <title>Histamine-releasing and antimicrobial peptides from the skin secretions of the dusky gopher frog, Rana sevosa.</title>
        <authorList>
            <person name="Graham C."/>
            <person name="Richter S.C."/>
            <person name="McClean S."/>
            <person name="O'Kane E."/>
            <person name="Flatt P.R."/>
            <person name="Shaw C."/>
        </authorList>
    </citation>
    <scope>PROTEIN SEQUENCE</scope>
    <scope>FUNCTION</scope>
    <scope>SUBCELLULAR LOCATION</scope>
    <scope>TISSUE SPECIFICITY</scope>
    <scope>MASS SPECTROMETRY</scope>
    <source>
        <tissue evidence="3">Skin secretion</tissue>
    </source>
</reference>